<comment type="function">
    <text evidence="1">Specifically methylates the guanosine in position 1516 of 16S rRNA.</text>
</comment>
<comment type="catalytic activity">
    <reaction evidence="1">
        <text>guanosine(1516) in 16S rRNA + S-adenosyl-L-methionine = N(2)-methylguanosine(1516) in 16S rRNA + S-adenosyl-L-homocysteine + H(+)</text>
        <dbReference type="Rhea" id="RHEA:43220"/>
        <dbReference type="Rhea" id="RHEA-COMP:10412"/>
        <dbReference type="Rhea" id="RHEA-COMP:10413"/>
        <dbReference type="ChEBI" id="CHEBI:15378"/>
        <dbReference type="ChEBI" id="CHEBI:57856"/>
        <dbReference type="ChEBI" id="CHEBI:59789"/>
        <dbReference type="ChEBI" id="CHEBI:74269"/>
        <dbReference type="ChEBI" id="CHEBI:74481"/>
        <dbReference type="EC" id="2.1.1.242"/>
    </reaction>
</comment>
<comment type="subcellular location">
    <subcellularLocation>
        <location evidence="1">Cytoplasm</location>
    </subcellularLocation>
</comment>
<comment type="similarity">
    <text evidence="1">Belongs to the methyltransferase superfamily. RsmJ family.</text>
</comment>
<evidence type="ECO:0000255" key="1">
    <source>
        <dbReference type="HAMAP-Rule" id="MF_01523"/>
    </source>
</evidence>
<reference key="1">
    <citation type="journal article" date="2004" name="Nat. Genet.">
        <title>Evidence in the Legionella pneumophila genome for exploitation of host cell functions and high genome plasticity.</title>
        <authorList>
            <person name="Cazalet C."/>
            <person name="Rusniok C."/>
            <person name="Brueggemann H."/>
            <person name="Zidane N."/>
            <person name="Magnier A."/>
            <person name="Ma L."/>
            <person name="Tichit M."/>
            <person name="Jarraud S."/>
            <person name="Bouchier C."/>
            <person name="Vandenesch F."/>
            <person name="Kunst F."/>
            <person name="Etienne J."/>
            <person name="Glaser P."/>
            <person name="Buchrieser C."/>
        </authorList>
    </citation>
    <scope>NUCLEOTIDE SEQUENCE [LARGE SCALE GENOMIC DNA]</scope>
    <source>
        <strain>Lens</strain>
    </source>
</reference>
<gene>
    <name evidence="1" type="primary">rsmJ</name>
    <name type="ordered locus">lpl1802</name>
</gene>
<proteinExistence type="inferred from homology"/>
<sequence>MNRIKAVGYENNELKEKAQLLADQLNLQLDQNADTCLFVTSEKLTLKIRNFSLMFADFSAMTWSKRRGEGKRQGLIRACKPTKGIKILDATAGWGKDAAILATFGADVLMLERHPVMAALLTDALSRRNEADIQKICLSLIASDAISFLHSLQEKDYPDIIYIDPMHPERNKSALVKKEMQVLQQLIGTDHDAMELIELSLSHVKSRVVVKWPQKVKPLLPPDASIDGKTVRFDIYMPQFSSN</sequence>
<accession>Q5WVL3</accession>
<keyword id="KW-0963">Cytoplasm</keyword>
<keyword id="KW-0489">Methyltransferase</keyword>
<keyword id="KW-0698">rRNA processing</keyword>
<keyword id="KW-0949">S-adenosyl-L-methionine</keyword>
<keyword id="KW-0808">Transferase</keyword>
<organism>
    <name type="scientific">Legionella pneumophila (strain Lens)</name>
    <dbReference type="NCBI Taxonomy" id="297245"/>
    <lineage>
        <taxon>Bacteria</taxon>
        <taxon>Pseudomonadati</taxon>
        <taxon>Pseudomonadota</taxon>
        <taxon>Gammaproteobacteria</taxon>
        <taxon>Legionellales</taxon>
        <taxon>Legionellaceae</taxon>
        <taxon>Legionella</taxon>
    </lineage>
</organism>
<name>RSMJ_LEGPL</name>
<protein>
    <recommendedName>
        <fullName evidence="1">Ribosomal RNA small subunit methyltransferase J</fullName>
        <ecNumber evidence="1">2.1.1.242</ecNumber>
    </recommendedName>
    <alternativeName>
        <fullName evidence="1">16S rRNA m2G1516 methyltransferase</fullName>
    </alternativeName>
    <alternativeName>
        <fullName evidence="1">rRNA (guanine-N(2)-)-methyltransferase</fullName>
    </alternativeName>
</protein>
<feature type="chain" id="PRO_0000212074" description="Ribosomal RNA small subunit methyltransferase J">
    <location>
        <begin position="1"/>
        <end position="243"/>
    </location>
</feature>
<feature type="binding site" evidence="1">
    <location>
        <begin position="112"/>
        <end position="113"/>
    </location>
    <ligand>
        <name>S-adenosyl-L-methionine</name>
        <dbReference type="ChEBI" id="CHEBI:59789"/>
    </ligand>
</feature>
<feature type="binding site" evidence="1">
    <location>
        <position position="164"/>
    </location>
    <ligand>
        <name>S-adenosyl-L-methionine</name>
        <dbReference type="ChEBI" id="CHEBI:59789"/>
    </ligand>
</feature>
<dbReference type="EC" id="2.1.1.242" evidence="1"/>
<dbReference type="EMBL" id="CR628337">
    <property type="protein sequence ID" value="CAH16041.1"/>
    <property type="molecule type" value="Genomic_DNA"/>
</dbReference>
<dbReference type="RefSeq" id="WP_011215807.1">
    <property type="nucleotide sequence ID" value="NC_006369.1"/>
</dbReference>
<dbReference type="SMR" id="Q5WVL3"/>
<dbReference type="KEGG" id="lpf:lpl1802"/>
<dbReference type="LegioList" id="lpl1802"/>
<dbReference type="HOGENOM" id="CLU_076324_1_0_6"/>
<dbReference type="Proteomes" id="UP000002517">
    <property type="component" value="Chromosome"/>
</dbReference>
<dbReference type="GO" id="GO:0005737">
    <property type="term" value="C:cytoplasm"/>
    <property type="evidence" value="ECO:0007669"/>
    <property type="project" value="UniProtKB-SubCell"/>
</dbReference>
<dbReference type="GO" id="GO:0008990">
    <property type="term" value="F:rRNA (guanine-N2-)-methyltransferase activity"/>
    <property type="evidence" value="ECO:0007669"/>
    <property type="project" value="UniProtKB-UniRule"/>
</dbReference>
<dbReference type="Gene3D" id="3.40.50.150">
    <property type="entry name" value="Vaccinia Virus protein VP39"/>
    <property type="match status" value="1"/>
</dbReference>
<dbReference type="HAMAP" id="MF_01523">
    <property type="entry name" value="16SrRNA_methyltr_J"/>
    <property type="match status" value="1"/>
</dbReference>
<dbReference type="InterPro" id="IPR007536">
    <property type="entry name" value="16SrRNA_methylTrfase_J"/>
</dbReference>
<dbReference type="InterPro" id="IPR029063">
    <property type="entry name" value="SAM-dependent_MTases_sf"/>
</dbReference>
<dbReference type="PANTHER" id="PTHR36112">
    <property type="entry name" value="RIBOSOMAL RNA SMALL SUBUNIT METHYLTRANSFERASE J"/>
    <property type="match status" value="1"/>
</dbReference>
<dbReference type="PANTHER" id="PTHR36112:SF1">
    <property type="entry name" value="RIBOSOMAL RNA SMALL SUBUNIT METHYLTRANSFERASE J"/>
    <property type="match status" value="1"/>
</dbReference>
<dbReference type="Pfam" id="PF04445">
    <property type="entry name" value="SAM_MT"/>
    <property type="match status" value="1"/>
</dbReference>
<dbReference type="SUPFAM" id="SSF53335">
    <property type="entry name" value="S-adenosyl-L-methionine-dependent methyltransferases"/>
    <property type="match status" value="1"/>
</dbReference>